<protein>
    <recommendedName>
        <fullName evidence="1">Putative membrane protein insertion efficiency factor</fullName>
    </recommendedName>
</protein>
<organism>
    <name type="scientific">Escherichia coli O6:H1 (strain CFT073 / ATCC 700928 / UPEC)</name>
    <dbReference type="NCBI Taxonomy" id="199310"/>
    <lineage>
        <taxon>Bacteria</taxon>
        <taxon>Pseudomonadati</taxon>
        <taxon>Pseudomonadota</taxon>
        <taxon>Gammaproteobacteria</taxon>
        <taxon>Enterobacterales</taxon>
        <taxon>Enterobacteriaceae</taxon>
        <taxon>Escherichia</taxon>
    </lineage>
</organism>
<keyword id="KW-0997">Cell inner membrane</keyword>
<keyword id="KW-1003">Cell membrane</keyword>
<keyword id="KW-0472">Membrane</keyword>
<keyword id="KW-1185">Reference proteome</keyword>
<gene>
    <name evidence="1" type="primary">yidD</name>
    <name type="ordered locus">c4628.1</name>
</gene>
<evidence type="ECO:0000255" key="1">
    <source>
        <dbReference type="HAMAP-Rule" id="MF_00386"/>
    </source>
</evidence>
<accession>P61467</accession>
<comment type="function">
    <text evidence="1">Could be involved in insertion of integral membrane proteins into the membrane.</text>
</comment>
<comment type="subcellular location">
    <subcellularLocation>
        <location evidence="1">Cell inner membrane</location>
        <topology evidence="1">Peripheral membrane protein</topology>
        <orientation evidence="1">Cytoplasmic side</orientation>
    </subcellularLocation>
</comment>
<comment type="similarity">
    <text evidence="1">Belongs to the UPF0161 family.</text>
</comment>
<sequence length="85" mass="9353">MAPPLSPGSRALIALIRVYQRLISPLLGPHCRFTPTCSSYGIEALRRFGVIKGSWLTVKRVLKCHPLHPGGDDPVPPGPFDTREH</sequence>
<name>YIDD_ECOL6</name>
<dbReference type="EMBL" id="AE014075">
    <property type="status" value="NOT_ANNOTATED_CDS"/>
    <property type="molecule type" value="Genomic_DNA"/>
</dbReference>
<dbReference type="RefSeq" id="WP_048901459.1">
    <property type="nucleotide sequence ID" value="NC_004431.1"/>
</dbReference>
<dbReference type="Proteomes" id="UP000001410">
    <property type="component" value="Chromosome"/>
</dbReference>
<dbReference type="GO" id="GO:0005886">
    <property type="term" value="C:plasma membrane"/>
    <property type="evidence" value="ECO:0007669"/>
    <property type="project" value="UniProtKB-SubCell"/>
</dbReference>
<dbReference type="HAMAP" id="MF_00386">
    <property type="entry name" value="UPF0161_YidD"/>
    <property type="match status" value="1"/>
</dbReference>
<dbReference type="InterPro" id="IPR002696">
    <property type="entry name" value="Membr_insert_effic_factor_YidD"/>
</dbReference>
<dbReference type="NCBIfam" id="TIGR00278">
    <property type="entry name" value="membrane protein insertion efficiency factor YidD"/>
    <property type="match status" value="1"/>
</dbReference>
<dbReference type="PANTHER" id="PTHR33383">
    <property type="entry name" value="MEMBRANE PROTEIN INSERTION EFFICIENCY FACTOR-RELATED"/>
    <property type="match status" value="1"/>
</dbReference>
<dbReference type="PANTHER" id="PTHR33383:SF1">
    <property type="entry name" value="MEMBRANE PROTEIN INSERTION EFFICIENCY FACTOR-RELATED"/>
    <property type="match status" value="1"/>
</dbReference>
<dbReference type="Pfam" id="PF01809">
    <property type="entry name" value="YidD"/>
    <property type="match status" value="1"/>
</dbReference>
<dbReference type="SMART" id="SM01234">
    <property type="entry name" value="Haemolytic"/>
    <property type="match status" value="1"/>
</dbReference>
<feature type="chain" id="PRO_0000171822" description="Putative membrane protein insertion efficiency factor">
    <location>
        <begin position="1"/>
        <end position="85"/>
    </location>
</feature>
<reference key="1">
    <citation type="journal article" date="2002" name="Proc. Natl. Acad. Sci. U.S.A.">
        <title>Extensive mosaic structure revealed by the complete genome sequence of uropathogenic Escherichia coli.</title>
        <authorList>
            <person name="Welch R.A."/>
            <person name="Burland V."/>
            <person name="Plunkett G. III"/>
            <person name="Redford P."/>
            <person name="Roesch P."/>
            <person name="Rasko D."/>
            <person name="Buckles E.L."/>
            <person name="Liou S.-R."/>
            <person name="Boutin A."/>
            <person name="Hackett J."/>
            <person name="Stroud D."/>
            <person name="Mayhew G.F."/>
            <person name="Rose D.J."/>
            <person name="Zhou S."/>
            <person name="Schwartz D.C."/>
            <person name="Perna N.T."/>
            <person name="Mobley H.L.T."/>
            <person name="Donnenberg M.S."/>
            <person name="Blattner F.R."/>
        </authorList>
    </citation>
    <scope>NUCLEOTIDE SEQUENCE [LARGE SCALE GENOMIC DNA]</scope>
    <source>
        <strain>CFT073 / ATCC 700928 / UPEC</strain>
    </source>
</reference>
<proteinExistence type="inferred from homology"/>